<sequence length="375" mass="40860">MKAILALEDGTLFHGHTFTGEGSAGGEVIFNTGMTGYQEVLTDPSYTGQMVCMTYPHVGNYGINPEDIESAHIRVAGFIVKECCKEPSNWRSTMTLPEYLTSQGITGIEGIDTRALTRHLRLHGAMRGYISTDVSDPQRVVGLAKGLPSMEGLGLADRVCCDAPFTWSGTAMEPAKIVDGTYAWPGTGPRLVVFDMGIKWNILRLLTAQGFDMLVVPYTTTAEQVRKLGPDAVFLSPGPGDPAALTDLVHTTSLLVNEYPLAGICLGHQLLGLALGGRTFKLKFGHHGLNHPVKDLQTGRIEISSQNHGFCVDIESLSDVELTHVNLNDNTLEGFAHKKKPVIAIQYHPEAAPGPHDSRYFFSRFRNLVRKETGK</sequence>
<protein>
    <recommendedName>
        <fullName evidence="1">Carbamoyl phosphate synthase small chain</fullName>
        <ecNumber evidence="1">6.3.5.5</ecNumber>
    </recommendedName>
    <alternativeName>
        <fullName evidence="1">Carbamoyl phosphate synthetase glutamine chain</fullName>
    </alternativeName>
</protein>
<evidence type="ECO:0000255" key="1">
    <source>
        <dbReference type="HAMAP-Rule" id="MF_01209"/>
    </source>
</evidence>
<gene>
    <name evidence="1" type="primary">carA</name>
    <name type="ordered locus">DMR_20320</name>
</gene>
<comment type="function">
    <text evidence="1">Small subunit of the glutamine-dependent carbamoyl phosphate synthetase (CPSase). CPSase catalyzes the formation of carbamoyl phosphate from the ammonia moiety of glutamine, carbonate, and phosphate donated by ATP, constituting the first step of 2 biosynthetic pathways, one leading to arginine and/or urea and the other to pyrimidine nucleotides. The small subunit (glutamine amidotransferase) binds and cleaves glutamine to supply the large subunit with the substrate ammonia.</text>
</comment>
<comment type="catalytic activity">
    <reaction evidence="1">
        <text>hydrogencarbonate + L-glutamine + 2 ATP + H2O = carbamoyl phosphate + L-glutamate + 2 ADP + phosphate + 2 H(+)</text>
        <dbReference type="Rhea" id="RHEA:18633"/>
        <dbReference type="ChEBI" id="CHEBI:15377"/>
        <dbReference type="ChEBI" id="CHEBI:15378"/>
        <dbReference type="ChEBI" id="CHEBI:17544"/>
        <dbReference type="ChEBI" id="CHEBI:29985"/>
        <dbReference type="ChEBI" id="CHEBI:30616"/>
        <dbReference type="ChEBI" id="CHEBI:43474"/>
        <dbReference type="ChEBI" id="CHEBI:58228"/>
        <dbReference type="ChEBI" id="CHEBI:58359"/>
        <dbReference type="ChEBI" id="CHEBI:456216"/>
        <dbReference type="EC" id="6.3.5.5"/>
    </reaction>
</comment>
<comment type="catalytic activity">
    <molecule>Carbamoyl phosphate synthase small chain</molecule>
    <reaction evidence="1">
        <text>L-glutamine + H2O = L-glutamate + NH4(+)</text>
        <dbReference type="Rhea" id="RHEA:15889"/>
        <dbReference type="ChEBI" id="CHEBI:15377"/>
        <dbReference type="ChEBI" id="CHEBI:28938"/>
        <dbReference type="ChEBI" id="CHEBI:29985"/>
        <dbReference type="ChEBI" id="CHEBI:58359"/>
    </reaction>
</comment>
<comment type="pathway">
    <text evidence="1">Amino-acid biosynthesis; L-arginine biosynthesis; carbamoyl phosphate from bicarbonate: step 1/1.</text>
</comment>
<comment type="pathway">
    <text evidence="1">Pyrimidine metabolism; UMP biosynthesis via de novo pathway; (S)-dihydroorotate from bicarbonate: step 1/3.</text>
</comment>
<comment type="subunit">
    <text evidence="1">Composed of two chains; the small (or glutamine) chain promotes the hydrolysis of glutamine to ammonia, which is used by the large (or ammonia) chain to synthesize carbamoyl phosphate. Tetramer of heterodimers (alpha,beta)4.</text>
</comment>
<comment type="similarity">
    <text evidence="1">Belongs to the CarA family.</text>
</comment>
<proteinExistence type="inferred from homology"/>
<reference key="1">
    <citation type="journal article" date="2009" name="Genome Res.">
        <title>Whole genome sequence of Desulfovibrio magneticus strain RS-1 revealed common gene clusters in magnetotactic bacteria.</title>
        <authorList>
            <person name="Nakazawa H."/>
            <person name="Arakaki A."/>
            <person name="Narita-Yamada S."/>
            <person name="Yashiro I."/>
            <person name="Jinno K."/>
            <person name="Aoki N."/>
            <person name="Tsuruyama A."/>
            <person name="Okamura Y."/>
            <person name="Tanikawa S."/>
            <person name="Fujita N."/>
            <person name="Takeyama H."/>
            <person name="Matsunaga T."/>
        </authorList>
    </citation>
    <scope>NUCLEOTIDE SEQUENCE [LARGE SCALE GENOMIC DNA]</scope>
    <source>
        <strain>ATCC 700980 / DSM 13731 / RS-1</strain>
    </source>
</reference>
<organism>
    <name type="scientific">Solidesulfovibrio magneticus (strain ATCC 700980 / DSM 13731 / RS-1)</name>
    <name type="common">Desulfovibrio magneticus</name>
    <dbReference type="NCBI Taxonomy" id="573370"/>
    <lineage>
        <taxon>Bacteria</taxon>
        <taxon>Pseudomonadati</taxon>
        <taxon>Thermodesulfobacteriota</taxon>
        <taxon>Desulfovibrionia</taxon>
        <taxon>Desulfovibrionales</taxon>
        <taxon>Desulfovibrionaceae</taxon>
        <taxon>Solidesulfovibrio</taxon>
    </lineage>
</organism>
<dbReference type="EC" id="6.3.5.5" evidence="1"/>
<dbReference type="EMBL" id="AP010904">
    <property type="protein sequence ID" value="BAH75523.1"/>
    <property type="molecule type" value="Genomic_DNA"/>
</dbReference>
<dbReference type="RefSeq" id="WP_015860714.1">
    <property type="nucleotide sequence ID" value="NC_012796.1"/>
</dbReference>
<dbReference type="SMR" id="C4XRH8"/>
<dbReference type="STRING" id="573370.DMR_20320"/>
<dbReference type="KEGG" id="dma:DMR_20320"/>
<dbReference type="eggNOG" id="COG0505">
    <property type="taxonomic scope" value="Bacteria"/>
</dbReference>
<dbReference type="HOGENOM" id="CLU_035901_2_1_7"/>
<dbReference type="OrthoDB" id="9804328at2"/>
<dbReference type="UniPathway" id="UPA00068">
    <property type="reaction ID" value="UER00171"/>
</dbReference>
<dbReference type="UniPathway" id="UPA00070">
    <property type="reaction ID" value="UER00115"/>
</dbReference>
<dbReference type="Proteomes" id="UP000009071">
    <property type="component" value="Chromosome"/>
</dbReference>
<dbReference type="GO" id="GO:0005524">
    <property type="term" value="F:ATP binding"/>
    <property type="evidence" value="ECO:0007669"/>
    <property type="project" value="UniProtKB-UniRule"/>
</dbReference>
<dbReference type="GO" id="GO:0004088">
    <property type="term" value="F:carbamoyl-phosphate synthase (glutamine-hydrolyzing) activity"/>
    <property type="evidence" value="ECO:0007669"/>
    <property type="project" value="UniProtKB-UniRule"/>
</dbReference>
<dbReference type="GO" id="GO:0004359">
    <property type="term" value="F:glutaminase activity"/>
    <property type="evidence" value="ECO:0007669"/>
    <property type="project" value="RHEA"/>
</dbReference>
<dbReference type="GO" id="GO:0006207">
    <property type="term" value="P:'de novo' pyrimidine nucleobase biosynthetic process"/>
    <property type="evidence" value="ECO:0007669"/>
    <property type="project" value="InterPro"/>
</dbReference>
<dbReference type="GO" id="GO:0044205">
    <property type="term" value="P:'de novo' UMP biosynthetic process"/>
    <property type="evidence" value="ECO:0007669"/>
    <property type="project" value="UniProtKB-UniRule"/>
</dbReference>
<dbReference type="GO" id="GO:0006541">
    <property type="term" value="P:glutamine metabolic process"/>
    <property type="evidence" value="ECO:0007669"/>
    <property type="project" value="InterPro"/>
</dbReference>
<dbReference type="GO" id="GO:0006526">
    <property type="term" value="P:L-arginine biosynthetic process"/>
    <property type="evidence" value="ECO:0007669"/>
    <property type="project" value="UniProtKB-UniRule"/>
</dbReference>
<dbReference type="CDD" id="cd01744">
    <property type="entry name" value="GATase1_CPSase"/>
    <property type="match status" value="1"/>
</dbReference>
<dbReference type="FunFam" id="3.50.30.20:FF:000001">
    <property type="entry name" value="Carbamoyl-phosphate synthase small chain"/>
    <property type="match status" value="1"/>
</dbReference>
<dbReference type="Gene3D" id="3.40.50.880">
    <property type="match status" value="1"/>
</dbReference>
<dbReference type="Gene3D" id="3.50.30.20">
    <property type="entry name" value="Carbamoyl-phosphate synthase small subunit, N-terminal domain"/>
    <property type="match status" value="1"/>
</dbReference>
<dbReference type="HAMAP" id="MF_01209">
    <property type="entry name" value="CPSase_S_chain"/>
    <property type="match status" value="1"/>
</dbReference>
<dbReference type="InterPro" id="IPR050472">
    <property type="entry name" value="Anth_synth/Amidotransfase"/>
</dbReference>
<dbReference type="InterPro" id="IPR006274">
    <property type="entry name" value="CarbamoylP_synth_ssu"/>
</dbReference>
<dbReference type="InterPro" id="IPR002474">
    <property type="entry name" value="CarbamoylP_synth_ssu_N"/>
</dbReference>
<dbReference type="InterPro" id="IPR036480">
    <property type="entry name" value="CarbP_synth_ssu_N_sf"/>
</dbReference>
<dbReference type="InterPro" id="IPR029062">
    <property type="entry name" value="Class_I_gatase-like"/>
</dbReference>
<dbReference type="InterPro" id="IPR035686">
    <property type="entry name" value="CPSase_GATase1"/>
</dbReference>
<dbReference type="InterPro" id="IPR017926">
    <property type="entry name" value="GATASE"/>
</dbReference>
<dbReference type="NCBIfam" id="TIGR01368">
    <property type="entry name" value="CPSaseIIsmall"/>
    <property type="match status" value="1"/>
</dbReference>
<dbReference type="NCBIfam" id="NF009475">
    <property type="entry name" value="PRK12838.1"/>
    <property type="match status" value="1"/>
</dbReference>
<dbReference type="PANTHER" id="PTHR43418:SF7">
    <property type="entry name" value="CARBAMOYL-PHOSPHATE SYNTHASE SMALL CHAIN"/>
    <property type="match status" value="1"/>
</dbReference>
<dbReference type="PANTHER" id="PTHR43418">
    <property type="entry name" value="MULTIFUNCTIONAL TRYPTOPHAN BIOSYNTHESIS PROTEIN-RELATED"/>
    <property type="match status" value="1"/>
</dbReference>
<dbReference type="Pfam" id="PF00988">
    <property type="entry name" value="CPSase_sm_chain"/>
    <property type="match status" value="1"/>
</dbReference>
<dbReference type="Pfam" id="PF00117">
    <property type="entry name" value="GATase"/>
    <property type="match status" value="1"/>
</dbReference>
<dbReference type="PRINTS" id="PR00097">
    <property type="entry name" value="ANTSNTHASEII"/>
</dbReference>
<dbReference type="PRINTS" id="PR00099">
    <property type="entry name" value="CPSGATASE"/>
</dbReference>
<dbReference type="PRINTS" id="PR00096">
    <property type="entry name" value="GATASE"/>
</dbReference>
<dbReference type="SMART" id="SM01097">
    <property type="entry name" value="CPSase_sm_chain"/>
    <property type="match status" value="1"/>
</dbReference>
<dbReference type="SUPFAM" id="SSF52021">
    <property type="entry name" value="Carbamoyl phosphate synthetase, small subunit N-terminal domain"/>
    <property type="match status" value="1"/>
</dbReference>
<dbReference type="SUPFAM" id="SSF52317">
    <property type="entry name" value="Class I glutamine amidotransferase-like"/>
    <property type="match status" value="1"/>
</dbReference>
<dbReference type="PROSITE" id="PS51273">
    <property type="entry name" value="GATASE_TYPE_1"/>
    <property type="match status" value="1"/>
</dbReference>
<accession>C4XRH8</accession>
<feature type="chain" id="PRO_1000213867" description="Carbamoyl phosphate synthase small chain">
    <location>
        <begin position="1"/>
        <end position="375"/>
    </location>
</feature>
<feature type="domain" description="Glutamine amidotransferase type-1" evidence="1">
    <location>
        <begin position="190"/>
        <end position="375"/>
    </location>
</feature>
<feature type="region of interest" description="CPSase" evidence="1">
    <location>
        <begin position="1"/>
        <end position="186"/>
    </location>
</feature>
<feature type="active site" description="Nucleophile" evidence="1">
    <location>
        <position position="265"/>
    </location>
</feature>
<feature type="active site" evidence="1">
    <location>
        <position position="348"/>
    </location>
</feature>
<feature type="active site" evidence="1">
    <location>
        <position position="350"/>
    </location>
</feature>
<feature type="binding site" evidence="1">
    <location>
        <position position="45"/>
    </location>
    <ligand>
        <name>L-glutamine</name>
        <dbReference type="ChEBI" id="CHEBI:58359"/>
    </ligand>
</feature>
<feature type="binding site" evidence="1">
    <location>
        <position position="238"/>
    </location>
    <ligand>
        <name>L-glutamine</name>
        <dbReference type="ChEBI" id="CHEBI:58359"/>
    </ligand>
</feature>
<feature type="binding site" evidence="1">
    <location>
        <position position="240"/>
    </location>
    <ligand>
        <name>L-glutamine</name>
        <dbReference type="ChEBI" id="CHEBI:58359"/>
    </ligand>
</feature>
<feature type="binding site" evidence="1">
    <location>
        <position position="266"/>
    </location>
    <ligand>
        <name>L-glutamine</name>
        <dbReference type="ChEBI" id="CHEBI:58359"/>
    </ligand>
</feature>
<feature type="binding site" evidence="1">
    <location>
        <position position="269"/>
    </location>
    <ligand>
        <name>L-glutamine</name>
        <dbReference type="ChEBI" id="CHEBI:58359"/>
    </ligand>
</feature>
<feature type="binding site" evidence="1">
    <location>
        <position position="307"/>
    </location>
    <ligand>
        <name>L-glutamine</name>
        <dbReference type="ChEBI" id="CHEBI:58359"/>
    </ligand>
</feature>
<feature type="binding site" evidence="1">
    <location>
        <position position="309"/>
    </location>
    <ligand>
        <name>L-glutamine</name>
        <dbReference type="ChEBI" id="CHEBI:58359"/>
    </ligand>
</feature>
<feature type="binding site" evidence="1">
    <location>
        <position position="310"/>
    </location>
    <ligand>
        <name>L-glutamine</name>
        <dbReference type="ChEBI" id="CHEBI:58359"/>
    </ligand>
</feature>
<name>CARA_SOLM1</name>
<keyword id="KW-0028">Amino-acid biosynthesis</keyword>
<keyword id="KW-0055">Arginine biosynthesis</keyword>
<keyword id="KW-0067">ATP-binding</keyword>
<keyword id="KW-0315">Glutamine amidotransferase</keyword>
<keyword id="KW-0436">Ligase</keyword>
<keyword id="KW-0547">Nucleotide-binding</keyword>
<keyword id="KW-0665">Pyrimidine biosynthesis</keyword>